<proteinExistence type="inferred from homology"/>
<feature type="chain" id="PRO_1000191508" description="NH(3)-dependent NAD(+) synthetase">
    <location>
        <begin position="1"/>
        <end position="274"/>
    </location>
</feature>
<feature type="binding site" evidence="1">
    <location>
        <begin position="46"/>
        <end position="53"/>
    </location>
    <ligand>
        <name>ATP</name>
        <dbReference type="ChEBI" id="CHEBI:30616"/>
    </ligand>
</feature>
<feature type="binding site" evidence="1">
    <location>
        <position position="52"/>
    </location>
    <ligand>
        <name>Mg(2+)</name>
        <dbReference type="ChEBI" id="CHEBI:18420"/>
    </ligand>
</feature>
<feature type="binding site" evidence="1">
    <location>
        <position position="140"/>
    </location>
    <ligand>
        <name>deamido-NAD(+)</name>
        <dbReference type="ChEBI" id="CHEBI:58437"/>
    </ligand>
</feature>
<feature type="binding site" evidence="1">
    <location>
        <position position="160"/>
    </location>
    <ligand>
        <name>ATP</name>
        <dbReference type="ChEBI" id="CHEBI:30616"/>
    </ligand>
</feature>
<feature type="binding site" evidence="1">
    <location>
        <position position="165"/>
    </location>
    <ligand>
        <name>Mg(2+)</name>
        <dbReference type="ChEBI" id="CHEBI:18420"/>
    </ligand>
</feature>
<feature type="binding site" evidence="1">
    <location>
        <position position="173"/>
    </location>
    <ligand>
        <name>deamido-NAD(+)</name>
        <dbReference type="ChEBI" id="CHEBI:58437"/>
    </ligand>
</feature>
<feature type="binding site" evidence="1">
    <location>
        <position position="180"/>
    </location>
    <ligand>
        <name>deamido-NAD(+)</name>
        <dbReference type="ChEBI" id="CHEBI:58437"/>
    </ligand>
</feature>
<feature type="binding site" evidence="1">
    <location>
        <position position="189"/>
    </location>
    <ligand>
        <name>ATP</name>
        <dbReference type="ChEBI" id="CHEBI:30616"/>
    </ligand>
</feature>
<feature type="binding site" evidence="1">
    <location>
        <position position="211"/>
    </location>
    <ligand>
        <name>ATP</name>
        <dbReference type="ChEBI" id="CHEBI:30616"/>
    </ligand>
</feature>
<feature type="binding site" evidence="1">
    <location>
        <begin position="260"/>
        <end position="261"/>
    </location>
    <ligand>
        <name>deamido-NAD(+)</name>
        <dbReference type="ChEBI" id="CHEBI:58437"/>
    </ligand>
</feature>
<sequence length="274" mass="30122">MSLQETIIQELGVKPVIDAQEEIRRSIDFLKRYLKKHPFLKTFVLGISGGQDSTLAGRLAQLAMEELRAETGDDSYKFIAVRLPYGVQADEADAQKALAFIQPDVSLVVNIKESADAMTAAVEATGSPVSDFNKGNIKARCRMIAQYALAGSHSGAVIGTDHAAENITGFFTKFGDGGADILPLYRLNKRQGKQLLQELGADPALYEKIPTADLEEDKPGLADEVALGVTYAEIDDYLEGKTISPEAQATIENWWHKGQHKRHLPITVFDDFWE</sequence>
<gene>
    <name evidence="1" type="primary">nadE</name>
    <name type="ordered locus">SP70585_1458</name>
</gene>
<organism>
    <name type="scientific">Streptococcus pneumoniae (strain 70585)</name>
    <dbReference type="NCBI Taxonomy" id="488221"/>
    <lineage>
        <taxon>Bacteria</taxon>
        <taxon>Bacillati</taxon>
        <taxon>Bacillota</taxon>
        <taxon>Bacilli</taxon>
        <taxon>Lactobacillales</taxon>
        <taxon>Streptococcaceae</taxon>
        <taxon>Streptococcus</taxon>
    </lineage>
</organism>
<comment type="function">
    <text evidence="1">Catalyzes the ATP-dependent amidation of deamido-NAD to form NAD. Uses ammonia as a nitrogen source.</text>
</comment>
<comment type="catalytic activity">
    <reaction evidence="1">
        <text>deamido-NAD(+) + NH4(+) + ATP = AMP + diphosphate + NAD(+) + H(+)</text>
        <dbReference type="Rhea" id="RHEA:21188"/>
        <dbReference type="ChEBI" id="CHEBI:15378"/>
        <dbReference type="ChEBI" id="CHEBI:28938"/>
        <dbReference type="ChEBI" id="CHEBI:30616"/>
        <dbReference type="ChEBI" id="CHEBI:33019"/>
        <dbReference type="ChEBI" id="CHEBI:57540"/>
        <dbReference type="ChEBI" id="CHEBI:58437"/>
        <dbReference type="ChEBI" id="CHEBI:456215"/>
        <dbReference type="EC" id="6.3.1.5"/>
    </reaction>
</comment>
<comment type="pathway">
    <text evidence="1">Cofactor biosynthesis; NAD(+) biosynthesis; NAD(+) from deamido-NAD(+) (ammonia route): step 1/1.</text>
</comment>
<comment type="subunit">
    <text evidence="1">Homodimer.</text>
</comment>
<comment type="similarity">
    <text evidence="1">Belongs to the NAD synthetase family.</text>
</comment>
<keyword id="KW-0067">ATP-binding</keyword>
<keyword id="KW-0436">Ligase</keyword>
<keyword id="KW-0460">Magnesium</keyword>
<keyword id="KW-0479">Metal-binding</keyword>
<keyword id="KW-0520">NAD</keyword>
<keyword id="KW-0547">Nucleotide-binding</keyword>
<accession>C1C818</accession>
<name>NADE_STRP7</name>
<protein>
    <recommendedName>
        <fullName evidence="1">NH(3)-dependent NAD(+) synthetase</fullName>
        <ecNumber evidence="1">6.3.1.5</ecNumber>
    </recommendedName>
</protein>
<dbReference type="EC" id="6.3.1.5" evidence="1"/>
<dbReference type="EMBL" id="CP000918">
    <property type="protein sequence ID" value="ACO17603.1"/>
    <property type="molecule type" value="Genomic_DNA"/>
</dbReference>
<dbReference type="RefSeq" id="WP_000058031.1">
    <property type="nucleotide sequence ID" value="NC_012468.1"/>
</dbReference>
<dbReference type="SMR" id="C1C818"/>
<dbReference type="KEGG" id="snm:SP70585_1458"/>
<dbReference type="HOGENOM" id="CLU_059327_3_0_9"/>
<dbReference type="UniPathway" id="UPA00253">
    <property type="reaction ID" value="UER00333"/>
</dbReference>
<dbReference type="Proteomes" id="UP000002211">
    <property type="component" value="Chromosome"/>
</dbReference>
<dbReference type="GO" id="GO:0005737">
    <property type="term" value="C:cytoplasm"/>
    <property type="evidence" value="ECO:0007669"/>
    <property type="project" value="InterPro"/>
</dbReference>
<dbReference type="GO" id="GO:0005524">
    <property type="term" value="F:ATP binding"/>
    <property type="evidence" value="ECO:0007669"/>
    <property type="project" value="UniProtKB-UniRule"/>
</dbReference>
<dbReference type="GO" id="GO:0004359">
    <property type="term" value="F:glutaminase activity"/>
    <property type="evidence" value="ECO:0007669"/>
    <property type="project" value="InterPro"/>
</dbReference>
<dbReference type="GO" id="GO:0046872">
    <property type="term" value="F:metal ion binding"/>
    <property type="evidence" value="ECO:0007669"/>
    <property type="project" value="UniProtKB-KW"/>
</dbReference>
<dbReference type="GO" id="GO:0003952">
    <property type="term" value="F:NAD+ synthase (glutamine-hydrolyzing) activity"/>
    <property type="evidence" value="ECO:0007669"/>
    <property type="project" value="InterPro"/>
</dbReference>
<dbReference type="GO" id="GO:0008795">
    <property type="term" value="F:NAD+ synthase activity"/>
    <property type="evidence" value="ECO:0007669"/>
    <property type="project" value="UniProtKB-UniRule"/>
</dbReference>
<dbReference type="GO" id="GO:0009435">
    <property type="term" value="P:NAD biosynthetic process"/>
    <property type="evidence" value="ECO:0007669"/>
    <property type="project" value="UniProtKB-UniRule"/>
</dbReference>
<dbReference type="CDD" id="cd00553">
    <property type="entry name" value="NAD_synthase"/>
    <property type="match status" value="1"/>
</dbReference>
<dbReference type="FunFam" id="3.40.50.620:FF:000015">
    <property type="entry name" value="NH(3)-dependent NAD(+) synthetase"/>
    <property type="match status" value="1"/>
</dbReference>
<dbReference type="Gene3D" id="3.40.50.620">
    <property type="entry name" value="HUPs"/>
    <property type="match status" value="1"/>
</dbReference>
<dbReference type="HAMAP" id="MF_00193">
    <property type="entry name" value="NadE_ammonia_dep"/>
    <property type="match status" value="1"/>
</dbReference>
<dbReference type="InterPro" id="IPR022310">
    <property type="entry name" value="NAD/GMP_synthase"/>
</dbReference>
<dbReference type="InterPro" id="IPR003694">
    <property type="entry name" value="NAD_synthase"/>
</dbReference>
<dbReference type="InterPro" id="IPR022926">
    <property type="entry name" value="NH(3)-dep_NAD(+)_synth"/>
</dbReference>
<dbReference type="InterPro" id="IPR014729">
    <property type="entry name" value="Rossmann-like_a/b/a_fold"/>
</dbReference>
<dbReference type="NCBIfam" id="TIGR00552">
    <property type="entry name" value="nadE"/>
    <property type="match status" value="1"/>
</dbReference>
<dbReference type="NCBIfam" id="NF001979">
    <property type="entry name" value="PRK00768.1"/>
    <property type="match status" value="1"/>
</dbReference>
<dbReference type="PANTHER" id="PTHR23090">
    <property type="entry name" value="NH 3 /GLUTAMINE-DEPENDENT NAD + SYNTHETASE"/>
    <property type="match status" value="1"/>
</dbReference>
<dbReference type="PANTHER" id="PTHR23090:SF7">
    <property type="entry name" value="NH(3)-DEPENDENT NAD(+) SYNTHETASE"/>
    <property type="match status" value="1"/>
</dbReference>
<dbReference type="Pfam" id="PF02540">
    <property type="entry name" value="NAD_synthase"/>
    <property type="match status" value="1"/>
</dbReference>
<dbReference type="SUPFAM" id="SSF52402">
    <property type="entry name" value="Adenine nucleotide alpha hydrolases-like"/>
    <property type="match status" value="1"/>
</dbReference>
<evidence type="ECO:0000255" key="1">
    <source>
        <dbReference type="HAMAP-Rule" id="MF_00193"/>
    </source>
</evidence>
<reference key="1">
    <citation type="journal article" date="2010" name="Genome Biol.">
        <title>Structure and dynamics of the pan-genome of Streptococcus pneumoniae and closely related species.</title>
        <authorList>
            <person name="Donati C."/>
            <person name="Hiller N.L."/>
            <person name="Tettelin H."/>
            <person name="Muzzi A."/>
            <person name="Croucher N.J."/>
            <person name="Angiuoli S.V."/>
            <person name="Oggioni M."/>
            <person name="Dunning Hotopp J.C."/>
            <person name="Hu F.Z."/>
            <person name="Riley D.R."/>
            <person name="Covacci A."/>
            <person name="Mitchell T.J."/>
            <person name="Bentley S.D."/>
            <person name="Kilian M."/>
            <person name="Ehrlich G.D."/>
            <person name="Rappuoli R."/>
            <person name="Moxon E.R."/>
            <person name="Masignani V."/>
        </authorList>
    </citation>
    <scope>NUCLEOTIDE SEQUENCE [LARGE SCALE GENOMIC DNA]</scope>
    <source>
        <strain>70585</strain>
    </source>
</reference>